<name>SWT10_ARATH</name>
<accession>Q9LUE3</accession>
<evidence type="ECO:0000250" key="1">
    <source>
        <dbReference type="UniProtKB" id="Q8L9J7"/>
    </source>
</evidence>
<evidence type="ECO:0000255" key="2"/>
<evidence type="ECO:0000269" key="3">
    <source>
    </source>
</evidence>
<evidence type="ECO:0000269" key="4">
    <source>
    </source>
</evidence>
<evidence type="ECO:0000303" key="5">
    <source>
    </source>
</evidence>
<evidence type="ECO:0000305" key="6"/>
<organism>
    <name type="scientific">Arabidopsis thaliana</name>
    <name type="common">Mouse-ear cress</name>
    <dbReference type="NCBI Taxonomy" id="3702"/>
    <lineage>
        <taxon>Eukaryota</taxon>
        <taxon>Viridiplantae</taxon>
        <taxon>Streptophyta</taxon>
        <taxon>Embryophyta</taxon>
        <taxon>Tracheophyta</taxon>
        <taxon>Spermatophyta</taxon>
        <taxon>Magnoliopsida</taxon>
        <taxon>eudicotyledons</taxon>
        <taxon>Gunneridae</taxon>
        <taxon>Pentapetalae</taxon>
        <taxon>rosids</taxon>
        <taxon>malvids</taxon>
        <taxon>Brassicales</taxon>
        <taxon>Brassicaceae</taxon>
        <taxon>Camelineae</taxon>
        <taxon>Arabidopsis</taxon>
    </lineage>
</organism>
<dbReference type="EMBL" id="AB023037">
    <property type="protein sequence ID" value="BAA96992.1"/>
    <property type="molecule type" value="Genomic_DNA"/>
</dbReference>
<dbReference type="EMBL" id="CP002688">
    <property type="protein sequence ID" value="AED95992.1"/>
    <property type="molecule type" value="Genomic_DNA"/>
</dbReference>
<dbReference type="EMBL" id="AY054548">
    <property type="protein sequence ID" value="AAK96739.1"/>
    <property type="molecule type" value="mRNA"/>
</dbReference>
<dbReference type="EMBL" id="AY064674">
    <property type="protein sequence ID" value="AAL47380.1"/>
    <property type="molecule type" value="mRNA"/>
</dbReference>
<dbReference type="EMBL" id="AY084672">
    <property type="protein sequence ID" value="AAM61234.1"/>
    <property type="molecule type" value="mRNA"/>
</dbReference>
<dbReference type="RefSeq" id="NP_199892.1">
    <property type="nucleotide sequence ID" value="NM_124457.4"/>
</dbReference>
<dbReference type="SMR" id="Q9LUE3"/>
<dbReference type="BioGRID" id="20397">
    <property type="interactions" value="1"/>
</dbReference>
<dbReference type="FunCoup" id="Q9LUE3">
    <property type="interactions" value="722"/>
</dbReference>
<dbReference type="STRING" id="3702.Q9LUE3"/>
<dbReference type="PaxDb" id="3702-AT5G50790.1"/>
<dbReference type="ProteomicsDB" id="226539"/>
<dbReference type="EnsemblPlants" id="AT5G50790.1">
    <property type="protein sequence ID" value="AT5G50790.1"/>
    <property type="gene ID" value="AT5G50790"/>
</dbReference>
<dbReference type="GeneID" id="835151"/>
<dbReference type="Gramene" id="AT5G50790.1">
    <property type="protein sequence ID" value="AT5G50790.1"/>
    <property type="gene ID" value="AT5G50790"/>
</dbReference>
<dbReference type="KEGG" id="ath:AT5G50790"/>
<dbReference type="Araport" id="AT5G50790"/>
<dbReference type="TAIR" id="AT5G50790">
    <property type="gene designation" value="SWEET10"/>
</dbReference>
<dbReference type="eggNOG" id="KOG1623">
    <property type="taxonomic scope" value="Eukaryota"/>
</dbReference>
<dbReference type="HOGENOM" id="CLU_048643_4_0_1"/>
<dbReference type="InParanoid" id="Q9LUE3"/>
<dbReference type="OMA" id="YMIYKKP"/>
<dbReference type="PhylomeDB" id="Q9LUE3"/>
<dbReference type="PRO" id="PR:Q9LUE3"/>
<dbReference type="Proteomes" id="UP000006548">
    <property type="component" value="Chromosome 5"/>
</dbReference>
<dbReference type="ExpressionAtlas" id="Q9LUE3">
    <property type="expression patterns" value="baseline and differential"/>
</dbReference>
<dbReference type="GO" id="GO:0005886">
    <property type="term" value="C:plasma membrane"/>
    <property type="evidence" value="ECO:0000250"/>
    <property type="project" value="UniProtKB"/>
</dbReference>
<dbReference type="GO" id="GO:0008515">
    <property type="term" value="F:sucrose transmembrane transporter activity"/>
    <property type="evidence" value="ECO:0000314"/>
    <property type="project" value="TAIR"/>
</dbReference>
<dbReference type="GO" id="GO:0051119">
    <property type="term" value="F:sugar transmembrane transporter activity"/>
    <property type="evidence" value="ECO:0000250"/>
    <property type="project" value="UniProtKB"/>
</dbReference>
<dbReference type="GO" id="GO:0048571">
    <property type="term" value="P:long-day photoperiodism"/>
    <property type="evidence" value="ECO:0000314"/>
    <property type="project" value="TAIR"/>
</dbReference>
<dbReference type="GO" id="GO:0015770">
    <property type="term" value="P:sucrose transport"/>
    <property type="evidence" value="ECO:0000314"/>
    <property type="project" value="TAIR"/>
</dbReference>
<dbReference type="FunFam" id="1.20.1280.290:FF:000001">
    <property type="entry name" value="Bidirectional sugar transporter SWEET"/>
    <property type="match status" value="1"/>
</dbReference>
<dbReference type="FunFam" id="1.20.1280.290:FF:000003">
    <property type="entry name" value="Bidirectional sugar transporter SWEET"/>
    <property type="match status" value="1"/>
</dbReference>
<dbReference type="Gene3D" id="1.20.1280.290">
    <property type="match status" value="2"/>
</dbReference>
<dbReference type="InterPro" id="IPR047664">
    <property type="entry name" value="SWEET"/>
</dbReference>
<dbReference type="InterPro" id="IPR004316">
    <property type="entry name" value="SWEET_rpt"/>
</dbReference>
<dbReference type="PANTHER" id="PTHR10791:SF165">
    <property type="entry name" value="BIDIRECTIONAL SUGAR TRANSPORTER SWEET10"/>
    <property type="match status" value="1"/>
</dbReference>
<dbReference type="PANTHER" id="PTHR10791">
    <property type="entry name" value="RAG1-ACTIVATING PROTEIN 1"/>
    <property type="match status" value="1"/>
</dbReference>
<dbReference type="Pfam" id="PF03083">
    <property type="entry name" value="MtN3_slv"/>
    <property type="match status" value="2"/>
</dbReference>
<comment type="function">
    <text evidence="1">Mediates both low-affinity uptake and efflux of sugar across the plasma membrane.</text>
</comment>
<comment type="subunit">
    <text evidence="4">Forms heterooligomers with SWEET8.</text>
</comment>
<comment type="subcellular location">
    <subcellularLocation>
        <location evidence="1">Cell membrane</location>
        <topology evidence="1">Multi-pass membrane protein</topology>
    </subcellularLocation>
</comment>
<comment type="induction">
    <text evidence="3">Induced by the pathogenic bacteria P.syringae pv. tomato.</text>
</comment>
<comment type="similarity">
    <text evidence="6">Belongs to the SWEET sugar transporter family.</text>
</comment>
<gene>
    <name evidence="5" type="primary">SWEET10</name>
    <name type="ordered locus">At5g50790</name>
    <name type="ORF">MFB16.19</name>
</gene>
<feature type="chain" id="PRO_0000404110" description="Bidirectional sugar transporter SWEET10">
    <location>
        <begin position="1"/>
        <end position="289"/>
    </location>
</feature>
<feature type="topological domain" description="Extracellular" evidence="2">
    <location>
        <begin position="1"/>
        <end position="5"/>
    </location>
</feature>
<feature type="transmembrane region" description="Helical; Name=1" evidence="2">
    <location>
        <begin position="6"/>
        <end position="26"/>
    </location>
</feature>
<feature type="topological domain" description="Cytoplasmic" evidence="2">
    <location>
        <begin position="27"/>
        <end position="43"/>
    </location>
</feature>
<feature type="transmembrane region" description="Helical; Name=2" evidence="2">
    <location>
        <begin position="44"/>
        <end position="64"/>
    </location>
</feature>
<feature type="topological domain" description="Extracellular" evidence="2">
    <location>
        <begin position="65"/>
        <end position="70"/>
    </location>
</feature>
<feature type="transmembrane region" description="Helical; Name=3" evidence="2">
    <location>
        <begin position="71"/>
        <end position="91"/>
    </location>
</feature>
<feature type="topological domain" description="Cytoplasmic" evidence="2">
    <location>
        <begin position="92"/>
        <end position="103"/>
    </location>
</feature>
<feature type="transmembrane region" description="Helical; Name=4" evidence="2">
    <location>
        <begin position="104"/>
        <end position="124"/>
    </location>
</feature>
<feature type="topological domain" description="Extracellular" evidence="2">
    <location>
        <begin position="125"/>
        <end position="131"/>
    </location>
</feature>
<feature type="transmembrane region" description="Helical; Name=5" evidence="2">
    <location>
        <begin position="132"/>
        <end position="152"/>
    </location>
</feature>
<feature type="topological domain" description="Cytoplasmic" evidence="2">
    <location>
        <begin position="153"/>
        <end position="165"/>
    </location>
</feature>
<feature type="transmembrane region" description="Helical; Name=6" evidence="2">
    <location>
        <begin position="166"/>
        <end position="186"/>
    </location>
</feature>
<feature type="topological domain" description="Extracellular" evidence="2">
    <location>
        <begin position="187"/>
        <end position="190"/>
    </location>
</feature>
<feature type="transmembrane region" description="Helical; Name=7" evidence="2">
    <location>
        <begin position="191"/>
        <end position="211"/>
    </location>
</feature>
<feature type="topological domain" description="Cytoplasmic" evidence="2">
    <location>
        <begin position="212"/>
        <end position="289"/>
    </location>
</feature>
<feature type="domain" description="MtN3/slv 1">
    <location>
        <begin position="11"/>
        <end position="96"/>
    </location>
</feature>
<feature type="domain" description="MtN3/slv 2">
    <location>
        <begin position="131"/>
        <end position="214"/>
    </location>
</feature>
<reference key="1">
    <citation type="journal article" date="2000" name="DNA Res.">
        <title>Structural analysis of Arabidopsis thaliana chromosome 5. X. Sequence features of the regions of 3,076,755 bp covered by sixty P1 and TAC clones.</title>
        <authorList>
            <person name="Sato S."/>
            <person name="Nakamura Y."/>
            <person name="Kaneko T."/>
            <person name="Katoh T."/>
            <person name="Asamizu E."/>
            <person name="Kotani H."/>
            <person name="Tabata S."/>
        </authorList>
    </citation>
    <scope>NUCLEOTIDE SEQUENCE [LARGE SCALE GENOMIC DNA]</scope>
    <source>
        <strain>cv. Columbia</strain>
    </source>
</reference>
<reference key="2">
    <citation type="journal article" date="2017" name="Plant J.">
        <title>Araport11: a complete reannotation of the Arabidopsis thaliana reference genome.</title>
        <authorList>
            <person name="Cheng C.Y."/>
            <person name="Krishnakumar V."/>
            <person name="Chan A.P."/>
            <person name="Thibaud-Nissen F."/>
            <person name="Schobel S."/>
            <person name="Town C.D."/>
        </authorList>
    </citation>
    <scope>GENOME REANNOTATION</scope>
    <source>
        <strain>cv. Columbia</strain>
    </source>
</reference>
<reference key="3">
    <citation type="journal article" date="2003" name="Science">
        <title>Empirical analysis of transcriptional activity in the Arabidopsis genome.</title>
        <authorList>
            <person name="Yamada K."/>
            <person name="Lim J."/>
            <person name="Dale J.M."/>
            <person name="Chen H."/>
            <person name="Shinn P."/>
            <person name="Palm C.J."/>
            <person name="Southwick A.M."/>
            <person name="Wu H.C."/>
            <person name="Kim C.J."/>
            <person name="Nguyen M."/>
            <person name="Pham P.K."/>
            <person name="Cheuk R.F."/>
            <person name="Karlin-Newmann G."/>
            <person name="Liu S.X."/>
            <person name="Lam B."/>
            <person name="Sakano H."/>
            <person name="Wu T."/>
            <person name="Yu G."/>
            <person name="Miranda M."/>
            <person name="Quach H.L."/>
            <person name="Tripp M."/>
            <person name="Chang C.H."/>
            <person name="Lee J.M."/>
            <person name="Toriumi M.J."/>
            <person name="Chan M.M."/>
            <person name="Tang C.C."/>
            <person name="Onodera C.S."/>
            <person name="Deng J.M."/>
            <person name="Akiyama K."/>
            <person name="Ansari Y."/>
            <person name="Arakawa T."/>
            <person name="Banh J."/>
            <person name="Banno F."/>
            <person name="Bowser L."/>
            <person name="Brooks S.Y."/>
            <person name="Carninci P."/>
            <person name="Chao Q."/>
            <person name="Choy N."/>
            <person name="Enju A."/>
            <person name="Goldsmith A.D."/>
            <person name="Gurjal M."/>
            <person name="Hansen N.F."/>
            <person name="Hayashizaki Y."/>
            <person name="Johnson-Hopson C."/>
            <person name="Hsuan V.W."/>
            <person name="Iida K."/>
            <person name="Karnes M."/>
            <person name="Khan S."/>
            <person name="Koesema E."/>
            <person name="Ishida J."/>
            <person name="Jiang P.X."/>
            <person name="Jones T."/>
            <person name="Kawai J."/>
            <person name="Kamiya A."/>
            <person name="Meyers C."/>
            <person name="Nakajima M."/>
            <person name="Narusaka M."/>
            <person name="Seki M."/>
            <person name="Sakurai T."/>
            <person name="Satou M."/>
            <person name="Tamse R."/>
            <person name="Vaysberg M."/>
            <person name="Wallender E.K."/>
            <person name="Wong C."/>
            <person name="Yamamura Y."/>
            <person name="Yuan S."/>
            <person name="Shinozaki K."/>
            <person name="Davis R.W."/>
            <person name="Theologis A."/>
            <person name="Ecker J.R."/>
        </authorList>
    </citation>
    <scope>NUCLEOTIDE SEQUENCE [LARGE SCALE MRNA]</scope>
    <source>
        <strain>cv. Columbia</strain>
    </source>
</reference>
<reference key="4">
    <citation type="submission" date="2002-03" db="EMBL/GenBank/DDBJ databases">
        <title>Full-length cDNA from Arabidopsis thaliana.</title>
        <authorList>
            <person name="Brover V.V."/>
            <person name="Troukhan M.E."/>
            <person name="Alexandrov N.A."/>
            <person name="Lu Y.-P."/>
            <person name="Flavell R.B."/>
            <person name="Feldmann K.A."/>
        </authorList>
    </citation>
    <scope>NUCLEOTIDE SEQUENCE [LARGE SCALE MRNA]</scope>
</reference>
<reference key="5">
    <citation type="journal article" date="2010" name="Nature">
        <title>Sugar transporters for intercellular exchange and nutrition of pathogens.</title>
        <authorList>
            <person name="Chen L.-Q."/>
            <person name="Hou B.-H."/>
            <person name="Lalonde S."/>
            <person name="Takanaga H."/>
            <person name="Hartung M.L."/>
            <person name="Qu X.-Q."/>
            <person name="Guo W.-J."/>
            <person name="Kim J.-G."/>
            <person name="Underwood W."/>
            <person name="Chaudhuri B."/>
            <person name="Chermak D."/>
            <person name="Antony G."/>
            <person name="White F.F."/>
            <person name="Somerville S.C."/>
            <person name="Mudgett M.B."/>
            <person name="Frommer W.B."/>
        </authorList>
    </citation>
    <scope>INDUCTION BY PATHOGENS</scope>
    <scope>GENE FAMILY</scope>
    <scope>NOMENCLATURE</scope>
    <source>
        <strain>cv. Columbia</strain>
    </source>
</reference>
<reference key="6">
    <citation type="journal article" date="2013" name="Proc. Natl. Acad. Sci. U.S.A.">
        <title>Functional role of oligomerization for bacterial and plant SWEET sugar transporter family.</title>
        <authorList>
            <person name="Xuan Y.H."/>
            <person name="Hu Y.B."/>
            <person name="Chen L.-Q."/>
            <person name="Sosso D."/>
            <person name="Ducat D.C."/>
            <person name="Hou B.-H."/>
            <person name="Frommer W.B."/>
        </authorList>
    </citation>
    <scope>INTERACTION WITH SWEET8</scope>
</reference>
<sequence>MAISQAVLATVFGILGNIISFFVCLAPIPTFVRIYKRKSSEGYQSIPYVISLFSAMLWMYYAMIKKDAMMLITINSFAFVVQIVYISLFFFYAPKKEKTLTVKFVLFVDVLGFGAIFVLTYFIIHANKRVQVLGYICMVFALSVFVAPLGIIRKVIKTKSAEFMPFGLSFFLTLSAVMWFFYGLLLKDMNIALPNVLGFIFGVLQMILFLIYKKPGTKVLEPPGIKLQDISEHVVDVVRLSTMVCNSQMRTLVPQDSADMEATIDIDEKIKGDIEKNKDEKEVFLISKN</sequence>
<keyword id="KW-1003">Cell membrane</keyword>
<keyword id="KW-0472">Membrane</keyword>
<keyword id="KW-1185">Reference proteome</keyword>
<keyword id="KW-0677">Repeat</keyword>
<keyword id="KW-0762">Sugar transport</keyword>
<keyword id="KW-0812">Transmembrane</keyword>
<keyword id="KW-1133">Transmembrane helix</keyword>
<keyword id="KW-0813">Transport</keyword>
<protein>
    <recommendedName>
        <fullName evidence="5">Bidirectional sugar transporter SWEET10</fullName>
        <shortName evidence="5">AtSWEET10</shortName>
    </recommendedName>
    <alternativeName>
        <fullName evidence="5">Protein SUGARS WILL EVENTUALLY BE EXPORTED TRANSPORTERS 10</fullName>
    </alternativeName>
</protein>
<proteinExistence type="evidence at protein level"/>